<feature type="chain" id="PRO_1000077216" description="Serine--tRNA ligase">
    <location>
        <begin position="1"/>
        <end position="428"/>
    </location>
</feature>
<feature type="binding site" evidence="1">
    <location>
        <begin position="235"/>
        <end position="237"/>
    </location>
    <ligand>
        <name>L-serine</name>
        <dbReference type="ChEBI" id="CHEBI:33384"/>
    </ligand>
</feature>
<feature type="binding site" evidence="1">
    <location>
        <begin position="266"/>
        <end position="268"/>
    </location>
    <ligand>
        <name>ATP</name>
        <dbReference type="ChEBI" id="CHEBI:30616"/>
    </ligand>
</feature>
<feature type="binding site" evidence="1">
    <location>
        <position position="289"/>
    </location>
    <ligand>
        <name>L-serine</name>
        <dbReference type="ChEBI" id="CHEBI:33384"/>
    </ligand>
</feature>
<feature type="binding site" evidence="1">
    <location>
        <begin position="353"/>
        <end position="356"/>
    </location>
    <ligand>
        <name>ATP</name>
        <dbReference type="ChEBI" id="CHEBI:30616"/>
    </ligand>
</feature>
<feature type="binding site" evidence="1">
    <location>
        <position position="389"/>
    </location>
    <ligand>
        <name>L-serine</name>
        <dbReference type="ChEBI" id="CHEBI:33384"/>
    </ligand>
</feature>
<evidence type="ECO:0000255" key="1">
    <source>
        <dbReference type="HAMAP-Rule" id="MF_00176"/>
    </source>
</evidence>
<keyword id="KW-0030">Aminoacyl-tRNA synthetase</keyword>
<keyword id="KW-0067">ATP-binding</keyword>
<keyword id="KW-0963">Cytoplasm</keyword>
<keyword id="KW-0436">Ligase</keyword>
<keyword id="KW-0547">Nucleotide-binding</keyword>
<keyword id="KW-0648">Protein biosynthesis</keyword>
<keyword id="KW-1185">Reference proteome</keyword>
<name>SYS_SHESH</name>
<accession>A8FV67</accession>
<dbReference type="EC" id="6.1.1.11" evidence="1"/>
<dbReference type="EMBL" id="CP000821">
    <property type="protein sequence ID" value="ABV36740.1"/>
    <property type="molecule type" value="Genomic_DNA"/>
</dbReference>
<dbReference type="RefSeq" id="WP_012142475.1">
    <property type="nucleotide sequence ID" value="NC_009831.1"/>
</dbReference>
<dbReference type="SMR" id="A8FV67"/>
<dbReference type="STRING" id="425104.Ssed_2131"/>
<dbReference type="KEGG" id="sse:Ssed_2131"/>
<dbReference type="eggNOG" id="COG0172">
    <property type="taxonomic scope" value="Bacteria"/>
</dbReference>
<dbReference type="HOGENOM" id="CLU_023797_1_1_6"/>
<dbReference type="OrthoDB" id="9804647at2"/>
<dbReference type="UniPathway" id="UPA00906">
    <property type="reaction ID" value="UER00895"/>
</dbReference>
<dbReference type="Proteomes" id="UP000002015">
    <property type="component" value="Chromosome"/>
</dbReference>
<dbReference type="GO" id="GO:0005737">
    <property type="term" value="C:cytoplasm"/>
    <property type="evidence" value="ECO:0007669"/>
    <property type="project" value="UniProtKB-SubCell"/>
</dbReference>
<dbReference type="GO" id="GO:0005524">
    <property type="term" value="F:ATP binding"/>
    <property type="evidence" value="ECO:0007669"/>
    <property type="project" value="UniProtKB-UniRule"/>
</dbReference>
<dbReference type="GO" id="GO:0004828">
    <property type="term" value="F:serine-tRNA ligase activity"/>
    <property type="evidence" value="ECO:0007669"/>
    <property type="project" value="UniProtKB-UniRule"/>
</dbReference>
<dbReference type="GO" id="GO:0016260">
    <property type="term" value="P:selenocysteine biosynthetic process"/>
    <property type="evidence" value="ECO:0007669"/>
    <property type="project" value="UniProtKB-UniRule"/>
</dbReference>
<dbReference type="GO" id="GO:0006434">
    <property type="term" value="P:seryl-tRNA aminoacylation"/>
    <property type="evidence" value="ECO:0007669"/>
    <property type="project" value="UniProtKB-UniRule"/>
</dbReference>
<dbReference type="CDD" id="cd00770">
    <property type="entry name" value="SerRS_core"/>
    <property type="match status" value="1"/>
</dbReference>
<dbReference type="Gene3D" id="3.30.930.10">
    <property type="entry name" value="Bira Bifunctional Protein, Domain 2"/>
    <property type="match status" value="1"/>
</dbReference>
<dbReference type="Gene3D" id="1.10.287.40">
    <property type="entry name" value="Serine-tRNA synthetase, tRNA binding domain"/>
    <property type="match status" value="1"/>
</dbReference>
<dbReference type="HAMAP" id="MF_00176">
    <property type="entry name" value="Ser_tRNA_synth_type1"/>
    <property type="match status" value="1"/>
</dbReference>
<dbReference type="InterPro" id="IPR002314">
    <property type="entry name" value="aa-tRNA-synt_IIb"/>
</dbReference>
<dbReference type="InterPro" id="IPR006195">
    <property type="entry name" value="aa-tRNA-synth_II"/>
</dbReference>
<dbReference type="InterPro" id="IPR045864">
    <property type="entry name" value="aa-tRNA-synth_II/BPL/LPL"/>
</dbReference>
<dbReference type="InterPro" id="IPR002317">
    <property type="entry name" value="Ser-tRNA-ligase_type_1"/>
</dbReference>
<dbReference type="InterPro" id="IPR015866">
    <property type="entry name" value="Ser-tRNA-synth_1_N"/>
</dbReference>
<dbReference type="InterPro" id="IPR042103">
    <property type="entry name" value="SerRS_1_N_sf"/>
</dbReference>
<dbReference type="InterPro" id="IPR033729">
    <property type="entry name" value="SerRS_core"/>
</dbReference>
<dbReference type="InterPro" id="IPR010978">
    <property type="entry name" value="tRNA-bd_arm"/>
</dbReference>
<dbReference type="NCBIfam" id="TIGR00414">
    <property type="entry name" value="serS"/>
    <property type="match status" value="1"/>
</dbReference>
<dbReference type="PANTHER" id="PTHR43697:SF1">
    <property type="entry name" value="SERINE--TRNA LIGASE"/>
    <property type="match status" value="1"/>
</dbReference>
<dbReference type="PANTHER" id="PTHR43697">
    <property type="entry name" value="SERYL-TRNA SYNTHETASE"/>
    <property type="match status" value="1"/>
</dbReference>
<dbReference type="Pfam" id="PF02403">
    <property type="entry name" value="Seryl_tRNA_N"/>
    <property type="match status" value="1"/>
</dbReference>
<dbReference type="Pfam" id="PF00587">
    <property type="entry name" value="tRNA-synt_2b"/>
    <property type="match status" value="1"/>
</dbReference>
<dbReference type="PIRSF" id="PIRSF001529">
    <property type="entry name" value="Ser-tRNA-synth_IIa"/>
    <property type="match status" value="1"/>
</dbReference>
<dbReference type="PRINTS" id="PR00981">
    <property type="entry name" value="TRNASYNTHSER"/>
</dbReference>
<dbReference type="SUPFAM" id="SSF55681">
    <property type="entry name" value="Class II aaRS and biotin synthetases"/>
    <property type="match status" value="1"/>
</dbReference>
<dbReference type="SUPFAM" id="SSF46589">
    <property type="entry name" value="tRNA-binding arm"/>
    <property type="match status" value="1"/>
</dbReference>
<dbReference type="PROSITE" id="PS50862">
    <property type="entry name" value="AA_TRNA_LIGASE_II"/>
    <property type="match status" value="1"/>
</dbReference>
<proteinExistence type="inferred from homology"/>
<reference key="1">
    <citation type="submission" date="2007-08" db="EMBL/GenBank/DDBJ databases">
        <title>Complete sequence of Shewanella sediminis HAW-EB3.</title>
        <authorList>
            <consortium name="US DOE Joint Genome Institute"/>
            <person name="Copeland A."/>
            <person name="Lucas S."/>
            <person name="Lapidus A."/>
            <person name="Barry K."/>
            <person name="Glavina del Rio T."/>
            <person name="Dalin E."/>
            <person name="Tice H."/>
            <person name="Pitluck S."/>
            <person name="Chertkov O."/>
            <person name="Brettin T."/>
            <person name="Bruce D."/>
            <person name="Detter J.C."/>
            <person name="Han C."/>
            <person name="Schmutz J."/>
            <person name="Larimer F."/>
            <person name="Land M."/>
            <person name="Hauser L."/>
            <person name="Kyrpides N."/>
            <person name="Kim E."/>
            <person name="Zhao J.-S."/>
            <person name="Richardson P."/>
        </authorList>
    </citation>
    <scope>NUCLEOTIDE SEQUENCE [LARGE SCALE GENOMIC DNA]</scope>
    <source>
        <strain>HAW-EB3</strain>
    </source>
</reference>
<comment type="function">
    <text evidence="1">Catalyzes the attachment of serine to tRNA(Ser). Is also able to aminoacylate tRNA(Sec) with serine, to form the misacylated tRNA L-seryl-tRNA(Sec), which will be further converted into selenocysteinyl-tRNA(Sec).</text>
</comment>
<comment type="catalytic activity">
    <reaction evidence="1">
        <text>tRNA(Ser) + L-serine + ATP = L-seryl-tRNA(Ser) + AMP + diphosphate + H(+)</text>
        <dbReference type="Rhea" id="RHEA:12292"/>
        <dbReference type="Rhea" id="RHEA-COMP:9669"/>
        <dbReference type="Rhea" id="RHEA-COMP:9703"/>
        <dbReference type="ChEBI" id="CHEBI:15378"/>
        <dbReference type="ChEBI" id="CHEBI:30616"/>
        <dbReference type="ChEBI" id="CHEBI:33019"/>
        <dbReference type="ChEBI" id="CHEBI:33384"/>
        <dbReference type="ChEBI" id="CHEBI:78442"/>
        <dbReference type="ChEBI" id="CHEBI:78533"/>
        <dbReference type="ChEBI" id="CHEBI:456215"/>
        <dbReference type="EC" id="6.1.1.11"/>
    </reaction>
</comment>
<comment type="catalytic activity">
    <reaction evidence="1">
        <text>tRNA(Sec) + L-serine + ATP = L-seryl-tRNA(Sec) + AMP + diphosphate + H(+)</text>
        <dbReference type="Rhea" id="RHEA:42580"/>
        <dbReference type="Rhea" id="RHEA-COMP:9742"/>
        <dbReference type="Rhea" id="RHEA-COMP:10128"/>
        <dbReference type="ChEBI" id="CHEBI:15378"/>
        <dbReference type="ChEBI" id="CHEBI:30616"/>
        <dbReference type="ChEBI" id="CHEBI:33019"/>
        <dbReference type="ChEBI" id="CHEBI:33384"/>
        <dbReference type="ChEBI" id="CHEBI:78442"/>
        <dbReference type="ChEBI" id="CHEBI:78533"/>
        <dbReference type="ChEBI" id="CHEBI:456215"/>
        <dbReference type="EC" id="6.1.1.11"/>
    </reaction>
</comment>
<comment type="pathway">
    <text evidence="1">Aminoacyl-tRNA biosynthesis; selenocysteinyl-tRNA(Sec) biosynthesis; L-seryl-tRNA(Sec) from L-serine and tRNA(Sec): step 1/1.</text>
</comment>
<comment type="subunit">
    <text evidence="1">Homodimer. The tRNA molecule binds across the dimer.</text>
</comment>
<comment type="subcellular location">
    <subcellularLocation>
        <location evidence="1">Cytoplasm</location>
    </subcellularLocation>
</comment>
<comment type="domain">
    <text evidence="1">Consists of two distinct domains, a catalytic core and a N-terminal extension that is involved in tRNA binding.</text>
</comment>
<comment type="similarity">
    <text evidence="1">Belongs to the class-II aminoacyl-tRNA synthetase family. Type-1 seryl-tRNA synthetase subfamily.</text>
</comment>
<sequence>MLDPKFLRTELEATAERLATRGFILDVERLSKLEEKRKSLQMATEELQASRNAISKSIGQAKAKGEDVAPIMAQVGDLGSQLDTKKQELAELLETLNAIAMSVPNLPDESVPAGADESENVEVRRWGTPKEFNFEVKDHVELGETLGGLDFKAAVKITGTRFIIMKGQIARMNRALAQFMLDLHTTEHGYTEAYVPLLVNEESLLGTGQLPKFGEDLFHTKPATEEGQGLSLIPTAEVPLTNIARDTIIDEADLPVKLTAHTPCFRSEAGSYGRDTRGLIRQHQFDKVELVQLVKPEDSMAALDSLTGHAETVLQKLELPYRTVVLCTGDMGFGSSKTFDIEVWLPAQNTYREISSCSNMQDFQARRMQARYKAKSAKKPALLHTLNGSGLAVGRTLVAVIENYQNEDGSITVPEVLRPYMGGLEKIG</sequence>
<gene>
    <name evidence="1" type="primary">serS</name>
    <name type="ordered locus">Ssed_2131</name>
</gene>
<organism>
    <name type="scientific">Shewanella sediminis (strain HAW-EB3)</name>
    <dbReference type="NCBI Taxonomy" id="425104"/>
    <lineage>
        <taxon>Bacteria</taxon>
        <taxon>Pseudomonadati</taxon>
        <taxon>Pseudomonadota</taxon>
        <taxon>Gammaproteobacteria</taxon>
        <taxon>Alteromonadales</taxon>
        <taxon>Shewanellaceae</taxon>
        <taxon>Shewanella</taxon>
    </lineage>
</organism>
<protein>
    <recommendedName>
        <fullName evidence="1">Serine--tRNA ligase</fullName>
        <ecNumber evidence="1">6.1.1.11</ecNumber>
    </recommendedName>
    <alternativeName>
        <fullName evidence="1">Seryl-tRNA synthetase</fullName>
        <shortName evidence="1">SerRS</shortName>
    </alternativeName>
    <alternativeName>
        <fullName evidence="1">Seryl-tRNA(Ser/Sec) synthetase</fullName>
    </alternativeName>
</protein>